<gene>
    <name type="primary">QSOX2</name>
    <name type="synonym">QSCN6L1</name>
    <name type="synonym">SOXN</name>
</gene>
<protein>
    <recommendedName>
        <fullName>Sulfhydryl oxidase 2</fullName>
        <ecNumber>1.8.3.2</ecNumber>
    </recommendedName>
    <alternativeName>
        <fullName>Neuroblastoma-derived sulfhydryl oxidase</fullName>
    </alternativeName>
    <alternativeName>
        <fullName>Quiescin Q6-like protein 1</fullName>
    </alternativeName>
</protein>
<comment type="function">
    <text evidence="7">Catalyzes the oxidation of sulfhydryl groups in peptide and protein thiols to disulfides with the reduction of oxygen to hydrogen peroxide. May contribute to disulfide bond formation in a variety of secreted proteins. Also seems to play a role in regulating the sensitization of neuroblastoma cells for interferon-gamma-induced apoptosis.</text>
</comment>
<comment type="catalytic activity">
    <reaction>
        <text>2 R'C(R)SH + O2 = R'C(R)S-S(R)CR' + H2O2</text>
        <dbReference type="Rhea" id="RHEA:17357"/>
        <dbReference type="ChEBI" id="CHEBI:15379"/>
        <dbReference type="ChEBI" id="CHEBI:16240"/>
        <dbReference type="ChEBI" id="CHEBI:16520"/>
        <dbReference type="ChEBI" id="CHEBI:17412"/>
        <dbReference type="EC" id="1.8.3.2"/>
    </reaction>
</comment>
<comment type="cofactor">
    <cofactor evidence="2">
        <name>FAD</name>
        <dbReference type="ChEBI" id="CHEBI:57692"/>
    </cofactor>
    <text evidence="2">Binds 1 FAD per subunit.</text>
</comment>
<comment type="subcellular location">
    <subcellularLocation>
        <location evidence="7">Membrane</location>
        <topology evidence="7">Single-pass membrane protein</topology>
    </subcellularLocation>
    <subcellularLocation>
        <location evidence="7">Secreted</location>
    </subcellularLocation>
    <subcellularLocation>
        <location evidence="8">Cell membrane</location>
        <topology evidence="8">Single-pass membrane protein</topology>
    </subcellularLocation>
    <subcellularLocation>
        <location evidence="8">Nucleus membrane</location>
        <topology evidence="8">Single-pass membrane protein</topology>
    </subcellularLocation>
    <text>Seems to be predominantly targeted to the nuclear and outer plasma membrane.</text>
</comment>
<comment type="tissue specificity">
    <text evidence="7">Expressed in pancreas, brain, placenta, kidney, heart and fetal tissues. Weakly expressed in lung, liver and skeletal muscles.</text>
</comment>
<comment type="similarity">
    <text evidence="8">Belongs to the quiescin-sulfhydryl oxidase (QSOX) family.</text>
</comment>
<comment type="sequence caution" evidence="8">
    <conflict type="erroneous initiation">
        <sequence resource="EMBL-CDS" id="BAC87262"/>
    </conflict>
</comment>
<comment type="sequence caution" evidence="8">
    <conflict type="frameshift">
        <sequence resource="EMBL-CDS" id="CAC85331"/>
    </conflict>
</comment>
<name>QSOX2_HUMAN</name>
<keyword id="KW-1003">Cell membrane</keyword>
<keyword id="KW-1015">Disulfide bond</keyword>
<keyword id="KW-0274">FAD</keyword>
<keyword id="KW-0285">Flavoprotein</keyword>
<keyword id="KW-0325">Glycoprotein</keyword>
<keyword id="KW-0472">Membrane</keyword>
<keyword id="KW-0539">Nucleus</keyword>
<keyword id="KW-0560">Oxidoreductase</keyword>
<keyword id="KW-0597">Phosphoprotein</keyword>
<keyword id="KW-1267">Proteomics identification</keyword>
<keyword id="KW-1185">Reference proteome</keyword>
<keyword id="KW-0964">Secreted</keyword>
<keyword id="KW-0732">Signal</keyword>
<keyword id="KW-0812">Transmembrane</keyword>
<keyword id="KW-1133">Transmembrane helix</keyword>
<accession>Q6ZRP7</accession>
<accession>A2CEE0</accession>
<accession>A6NLB0</accession>
<accession>Q5TB37</accession>
<accession>Q7Z7B6</accession>
<accession>Q86VV7</accession>
<accession>Q8N3G2</accession>
<evidence type="ECO:0000250" key="1"/>
<evidence type="ECO:0000250" key="2">
    <source>
        <dbReference type="UniProtKB" id="O00391"/>
    </source>
</evidence>
<evidence type="ECO:0000255" key="3"/>
<evidence type="ECO:0000255" key="4">
    <source>
        <dbReference type="PROSITE-ProRule" id="PRU00654"/>
    </source>
</evidence>
<evidence type="ECO:0000255" key="5">
    <source>
        <dbReference type="PROSITE-ProRule" id="PRU00691"/>
    </source>
</evidence>
<evidence type="ECO:0000256" key="6">
    <source>
        <dbReference type="SAM" id="MobiDB-lite"/>
    </source>
</evidence>
<evidence type="ECO:0000269" key="7">
    <source>
    </source>
</evidence>
<evidence type="ECO:0000305" key="8"/>
<evidence type="ECO:0007744" key="9">
    <source>
    </source>
</evidence>
<reference key="1">
    <citation type="journal article" date="2003" name="Cancer Res.">
        <title>Neuroblastoma-derived sulfhydryl oxidase, a new member of the sulfhydryl oxidase/quiescin 6 family, regulates sensitization to interferon gamma-induced cell death in human neuroblastoma cells.</title>
        <authorList>
            <person name="Wittke I."/>
            <person name="Wiedemeyer R."/>
            <person name="Pillmann A."/>
            <person name="Savelyeva L."/>
            <person name="Westermann F."/>
            <person name="Schwab M."/>
        </authorList>
    </citation>
    <scope>NUCLEOTIDE SEQUENCE [MRNA]</scope>
    <scope>FUNCTION</scope>
    <scope>SUBCELLULAR LOCATION</scope>
    <scope>TISSUE SPECIFICITY</scope>
</reference>
<reference key="2">
    <citation type="journal article" date="2004" name="Nature">
        <title>DNA sequence and analysis of human chromosome 9.</title>
        <authorList>
            <person name="Humphray S.J."/>
            <person name="Oliver K."/>
            <person name="Hunt A.R."/>
            <person name="Plumb R.W."/>
            <person name="Loveland J.E."/>
            <person name="Howe K.L."/>
            <person name="Andrews T.D."/>
            <person name="Searle S."/>
            <person name="Hunt S.E."/>
            <person name="Scott C.E."/>
            <person name="Jones M.C."/>
            <person name="Ainscough R."/>
            <person name="Almeida J.P."/>
            <person name="Ambrose K.D."/>
            <person name="Ashwell R.I.S."/>
            <person name="Babbage A.K."/>
            <person name="Babbage S."/>
            <person name="Bagguley C.L."/>
            <person name="Bailey J."/>
            <person name="Banerjee R."/>
            <person name="Barker D.J."/>
            <person name="Barlow K.F."/>
            <person name="Bates K."/>
            <person name="Beasley H."/>
            <person name="Beasley O."/>
            <person name="Bird C.P."/>
            <person name="Bray-Allen S."/>
            <person name="Brown A.J."/>
            <person name="Brown J.Y."/>
            <person name="Burford D."/>
            <person name="Burrill W."/>
            <person name="Burton J."/>
            <person name="Carder C."/>
            <person name="Carter N.P."/>
            <person name="Chapman J.C."/>
            <person name="Chen Y."/>
            <person name="Clarke G."/>
            <person name="Clark S.Y."/>
            <person name="Clee C.M."/>
            <person name="Clegg S."/>
            <person name="Collier R.E."/>
            <person name="Corby N."/>
            <person name="Crosier M."/>
            <person name="Cummings A.T."/>
            <person name="Davies J."/>
            <person name="Dhami P."/>
            <person name="Dunn M."/>
            <person name="Dutta I."/>
            <person name="Dyer L.W."/>
            <person name="Earthrowl M.E."/>
            <person name="Faulkner L."/>
            <person name="Fleming C.J."/>
            <person name="Frankish A."/>
            <person name="Frankland J.A."/>
            <person name="French L."/>
            <person name="Fricker D.G."/>
            <person name="Garner P."/>
            <person name="Garnett J."/>
            <person name="Ghori J."/>
            <person name="Gilbert J.G.R."/>
            <person name="Glison C."/>
            <person name="Grafham D.V."/>
            <person name="Gribble S."/>
            <person name="Griffiths C."/>
            <person name="Griffiths-Jones S."/>
            <person name="Grocock R."/>
            <person name="Guy J."/>
            <person name="Hall R.E."/>
            <person name="Hammond S."/>
            <person name="Harley J.L."/>
            <person name="Harrison E.S.I."/>
            <person name="Hart E.A."/>
            <person name="Heath P.D."/>
            <person name="Henderson C.D."/>
            <person name="Hopkins B.L."/>
            <person name="Howard P.J."/>
            <person name="Howden P.J."/>
            <person name="Huckle E."/>
            <person name="Johnson C."/>
            <person name="Johnson D."/>
            <person name="Joy A.A."/>
            <person name="Kay M."/>
            <person name="Keenan S."/>
            <person name="Kershaw J.K."/>
            <person name="Kimberley A.M."/>
            <person name="King A."/>
            <person name="Knights A."/>
            <person name="Laird G.K."/>
            <person name="Langford C."/>
            <person name="Lawlor S."/>
            <person name="Leongamornlert D.A."/>
            <person name="Leversha M."/>
            <person name="Lloyd C."/>
            <person name="Lloyd D.M."/>
            <person name="Lovell J."/>
            <person name="Martin S."/>
            <person name="Mashreghi-Mohammadi M."/>
            <person name="Matthews L."/>
            <person name="McLaren S."/>
            <person name="McLay K.E."/>
            <person name="McMurray A."/>
            <person name="Milne S."/>
            <person name="Nickerson T."/>
            <person name="Nisbett J."/>
            <person name="Nordsiek G."/>
            <person name="Pearce A.V."/>
            <person name="Peck A.I."/>
            <person name="Porter K.M."/>
            <person name="Pandian R."/>
            <person name="Pelan S."/>
            <person name="Phillimore B."/>
            <person name="Povey S."/>
            <person name="Ramsey Y."/>
            <person name="Rand V."/>
            <person name="Scharfe M."/>
            <person name="Sehra H.K."/>
            <person name="Shownkeen R."/>
            <person name="Sims S.K."/>
            <person name="Skuce C.D."/>
            <person name="Smith M."/>
            <person name="Steward C.A."/>
            <person name="Swarbreck D."/>
            <person name="Sycamore N."/>
            <person name="Tester J."/>
            <person name="Thorpe A."/>
            <person name="Tracey A."/>
            <person name="Tromans A."/>
            <person name="Thomas D.W."/>
            <person name="Wall M."/>
            <person name="Wallis J.M."/>
            <person name="West A.P."/>
            <person name="Whitehead S.L."/>
            <person name="Willey D.L."/>
            <person name="Williams S.A."/>
            <person name="Wilming L."/>
            <person name="Wray P.W."/>
            <person name="Young L."/>
            <person name="Ashurst J.L."/>
            <person name="Coulson A."/>
            <person name="Blocker H."/>
            <person name="Durbin R.M."/>
            <person name="Sulston J.E."/>
            <person name="Hubbard T."/>
            <person name="Jackson M.J."/>
            <person name="Bentley D.R."/>
            <person name="Beck S."/>
            <person name="Rogers J."/>
            <person name="Dunham I."/>
        </authorList>
    </citation>
    <scope>NUCLEOTIDE SEQUENCE [LARGE SCALE GENOMIC DNA]</scope>
</reference>
<reference key="3">
    <citation type="journal article" date="2004" name="Nat. Genet.">
        <title>Complete sequencing and characterization of 21,243 full-length human cDNAs.</title>
        <authorList>
            <person name="Ota T."/>
            <person name="Suzuki Y."/>
            <person name="Nishikawa T."/>
            <person name="Otsuki T."/>
            <person name="Sugiyama T."/>
            <person name="Irie R."/>
            <person name="Wakamatsu A."/>
            <person name="Hayashi K."/>
            <person name="Sato H."/>
            <person name="Nagai K."/>
            <person name="Kimura K."/>
            <person name="Makita H."/>
            <person name="Sekine M."/>
            <person name="Obayashi M."/>
            <person name="Nishi T."/>
            <person name="Shibahara T."/>
            <person name="Tanaka T."/>
            <person name="Ishii S."/>
            <person name="Yamamoto J."/>
            <person name="Saito K."/>
            <person name="Kawai Y."/>
            <person name="Isono Y."/>
            <person name="Nakamura Y."/>
            <person name="Nagahari K."/>
            <person name="Murakami K."/>
            <person name="Yasuda T."/>
            <person name="Iwayanagi T."/>
            <person name="Wagatsuma M."/>
            <person name="Shiratori A."/>
            <person name="Sudo H."/>
            <person name="Hosoiri T."/>
            <person name="Kaku Y."/>
            <person name="Kodaira H."/>
            <person name="Kondo H."/>
            <person name="Sugawara M."/>
            <person name="Takahashi M."/>
            <person name="Kanda K."/>
            <person name="Yokoi T."/>
            <person name="Furuya T."/>
            <person name="Kikkawa E."/>
            <person name="Omura Y."/>
            <person name="Abe K."/>
            <person name="Kamihara K."/>
            <person name="Katsuta N."/>
            <person name="Sato K."/>
            <person name="Tanikawa M."/>
            <person name="Yamazaki M."/>
            <person name="Ninomiya K."/>
            <person name="Ishibashi T."/>
            <person name="Yamashita H."/>
            <person name="Murakawa K."/>
            <person name="Fujimori K."/>
            <person name="Tanai H."/>
            <person name="Kimata M."/>
            <person name="Watanabe M."/>
            <person name="Hiraoka S."/>
            <person name="Chiba Y."/>
            <person name="Ishida S."/>
            <person name="Ono Y."/>
            <person name="Takiguchi S."/>
            <person name="Watanabe S."/>
            <person name="Yosida M."/>
            <person name="Hotuta T."/>
            <person name="Kusano J."/>
            <person name="Kanehori K."/>
            <person name="Takahashi-Fujii A."/>
            <person name="Hara H."/>
            <person name="Tanase T.-O."/>
            <person name="Nomura Y."/>
            <person name="Togiya S."/>
            <person name="Komai F."/>
            <person name="Hara R."/>
            <person name="Takeuchi K."/>
            <person name="Arita M."/>
            <person name="Imose N."/>
            <person name="Musashino K."/>
            <person name="Yuuki H."/>
            <person name="Oshima A."/>
            <person name="Sasaki N."/>
            <person name="Aotsuka S."/>
            <person name="Yoshikawa Y."/>
            <person name="Matsunawa H."/>
            <person name="Ichihara T."/>
            <person name="Shiohata N."/>
            <person name="Sano S."/>
            <person name="Moriya S."/>
            <person name="Momiyama H."/>
            <person name="Satoh N."/>
            <person name="Takami S."/>
            <person name="Terashima Y."/>
            <person name="Suzuki O."/>
            <person name="Nakagawa S."/>
            <person name="Senoh A."/>
            <person name="Mizoguchi H."/>
            <person name="Goto Y."/>
            <person name="Shimizu F."/>
            <person name="Wakebe H."/>
            <person name="Hishigaki H."/>
            <person name="Watanabe T."/>
            <person name="Sugiyama A."/>
            <person name="Takemoto M."/>
            <person name="Kawakami B."/>
            <person name="Yamazaki M."/>
            <person name="Watanabe K."/>
            <person name="Kumagai A."/>
            <person name="Itakura S."/>
            <person name="Fukuzumi Y."/>
            <person name="Fujimori Y."/>
            <person name="Komiyama M."/>
            <person name="Tashiro H."/>
            <person name="Tanigami A."/>
            <person name="Fujiwara T."/>
            <person name="Ono T."/>
            <person name="Yamada K."/>
            <person name="Fujii Y."/>
            <person name="Ozaki K."/>
            <person name="Hirao M."/>
            <person name="Ohmori Y."/>
            <person name="Kawabata A."/>
            <person name="Hikiji T."/>
            <person name="Kobatake N."/>
            <person name="Inagaki H."/>
            <person name="Ikema Y."/>
            <person name="Okamoto S."/>
            <person name="Okitani R."/>
            <person name="Kawakami T."/>
            <person name="Noguchi S."/>
            <person name="Itoh T."/>
            <person name="Shigeta K."/>
            <person name="Senba T."/>
            <person name="Matsumura K."/>
            <person name="Nakajima Y."/>
            <person name="Mizuno T."/>
            <person name="Morinaga M."/>
            <person name="Sasaki M."/>
            <person name="Togashi T."/>
            <person name="Oyama M."/>
            <person name="Hata H."/>
            <person name="Watanabe M."/>
            <person name="Komatsu T."/>
            <person name="Mizushima-Sugano J."/>
            <person name="Satoh T."/>
            <person name="Shirai Y."/>
            <person name="Takahashi Y."/>
            <person name="Nakagawa K."/>
            <person name="Okumura K."/>
            <person name="Nagase T."/>
            <person name="Nomura N."/>
            <person name="Kikuchi H."/>
            <person name="Masuho Y."/>
            <person name="Yamashita R."/>
            <person name="Nakai K."/>
            <person name="Yada T."/>
            <person name="Nakamura Y."/>
            <person name="Ohara O."/>
            <person name="Isogai T."/>
            <person name="Sugano S."/>
        </authorList>
    </citation>
    <scope>NUCLEOTIDE SEQUENCE [LARGE SCALE MRNA] OF 100-698</scope>
    <source>
        <tissue>Testis</tissue>
    </source>
</reference>
<reference key="4">
    <citation type="journal article" date="2007" name="BMC Genomics">
        <title>The full-ORF clone resource of the German cDNA consortium.</title>
        <authorList>
            <person name="Bechtel S."/>
            <person name="Rosenfelder H."/>
            <person name="Duda A."/>
            <person name="Schmidt C.P."/>
            <person name="Ernst U."/>
            <person name="Wellenreuther R."/>
            <person name="Mehrle A."/>
            <person name="Schuster C."/>
            <person name="Bahr A."/>
            <person name="Bloecker H."/>
            <person name="Heubner D."/>
            <person name="Hoerlein A."/>
            <person name="Michel G."/>
            <person name="Wedler H."/>
            <person name="Koehrer K."/>
            <person name="Ottenwaelder B."/>
            <person name="Poustka A."/>
            <person name="Wiemann S."/>
            <person name="Schupp I."/>
        </authorList>
    </citation>
    <scope>NUCLEOTIDE SEQUENCE [LARGE SCALE MRNA] OF 158-698</scope>
    <source>
        <tissue>Melanoma</tissue>
    </source>
</reference>
<reference key="5">
    <citation type="journal article" date="2008" name="Mol. Cell">
        <title>Kinase-selective enrichment enables quantitative phosphoproteomics of the kinome across the cell cycle.</title>
        <authorList>
            <person name="Daub H."/>
            <person name="Olsen J.V."/>
            <person name="Bairlein M."/>
            <person name="Gnad F."/>
            <person name="Oppermann F.S."/>
            <person name="Korner R."/>
            <person name="Greff Z."/>
            <person name="Keri G."/>
            <person name="Stemmann O."/>
            <person name="Mann M."/>
        </authorList>
    </citation>
    <scope>IDENTIFICATION BY MASS SPECTROMETRY [LARGE SCALE ANALYSIS]</scope>
    <source>
        <tissue>Cervix carcinoma</tissue>
    </source>
</reference>
<reference key="6">
    <citation type="journal article" date="2008" name="Proc. Natl. Acad. Sci. U.S.A.">
        <title>A quantitative atlas of mitotic phosphorylation.</title>
        <authorList>
            <person name="Dephoure N."/>
            <person name="Zhou C."/>
            <person name="Villen J."/>
            <person name="Beausoleil S.A."/>
            <person name="Bakalarski C.E."/>
            <person name="Elledge S.J."/>
            <person name="Gygi S.P."/>
        </authorList>
    </citation>
    <scope>IDENTIFICATION BY MASS SPECTROMETRY [LARGE SCALE ANALYSIS]</scope>
    <source>
        <tissue>Cervix carcinoma</tissue>
    </source>
</reference>
<reference key="7">
    <citation type="journal article" date="2010" name="Sci. Signal.">
        <title>Quantitative phosphoproteomics reveals widespread full phosphorylation site occupancy during mitosis.</title>
        <authorList>
            <person name="Olsen J.V."/>
            <person name="Vermeulen M."/>
            <person name="Santamaria A."/>
            <person name="Kumar C."/>
            <person name="Miller M.L."/>
            <person name="Jensen L.J."/>
            <person name="Gnad F."/>
            <person name="Cox J."/>
            <person name="Jensen T.S."/>
            <person name="Nigg E.A."/>
            <person name="Brunak S."/>
            <person name="Mann M."/>
        </authorList>
    </citation>
    <scope>IDENTIFICATION BY MASS SPECTROMETRY [LARGE SCALE ANALYSIS]</scope>
    <source>
        <tissue>Cervix carcinoma</tissue>
    </source>
</reference>
<reference key="8">
    <citation type="journal article" date="2011" name="Sci. Signal.">
        <title>System-wide temporal characterization of the proteome and phosphoproteome of human embryonic stem cell differentiation.</title>
        <authorList>
            <person name="Rigbolt K.T."/>
            <person name="Prokhorova T.A."/>
            <person name="Akimov V."/>
            <person name="Henningsen J."/>
            <person name="Johansen P.T."/>
            <person name="Kratchmarova I."/>
            <person name="Kassem M."/>
            <person name="Mann M."/>
            <person name="Olsen J.V."/>
            <person name="Blagoev B."/>
        </authorList>
    </citation>
    <scope>PHOSPHORYLATION [LARGE SCALE ANALYSIS] AT SER-579</scope>
    <scope>IDENTIFICATION BY MASS SPECTROMETRY [LARGE SCALE ANALYSIS]</scope>
</reference>
<reference key="9">
    <citation type="journal article" date="2013" name="J. Proteome Res.">
        <title>Toward a comprehensive characterization of a human cancer cell phosphoproteome.</title>
        <authorList>
            <person name="Zhou H."/>
            <person name="Di Palma S."/>
            <person name="Preisinger C."/>
            <person name="Peng M."/>
            <person name="Polat A.N."/>
            <person name="Heck A.J."/>
            <person name="Mohammed S."/>
        </authorList>
    </citation>
    <scope>IDENTIFICATION BY MASS SPECTROMETRY [LARGE SCALE ANALYSIS]</scope>
    <source>
        <tissue>Cervix carcinoma</tissue>
    </source>
</reference>
<reference key="10">
    <citation type="journal article" date="2014" name="J. Proteomics">
        <title>An enzyme assisted RP-RPLC approach for in-depth analysis of human liver phosphoproteome.</title>
        <authorList>
            <person name="Bian Y."/>
            <person name="Song C."/>
            <person name="Cheng K."/>
            <person name="Dong M."/>
            <person name="Wang F."/>
            <person name="Huang J."/>
            <person name="Sun D."/>
            <person name="Wang L."/>
            <person name="Ye M."/>
            <person name="Zou H."/>
        </authorList>
    </citation>
    <scope>IDENTIFICATION BY MASS SPECTROMETRY [LARGE SCALE ANALYSIS]</scope>
    <source>
        <tissue>Liver</tissue>
    </source>
</reference>
<organism>
    <name type="scientific">Homo sapiens</name>
    <name type="common">Human</name>
    <dbReference type="NCBI Taxonomy" id="9606"/>
    <lineage>
        <taxon>Eukaryota</taxon>
        <taxon>Metazoa</taxon>
        <taxon>Chordata</taxon>
        <taxon>Craniata</taxon>
        <taxon>Vertebrata</taxon>
        <taxon>Euteleostomi</taxon>
        <taxon>Mammalia</taxon>
        <taxon>Eutheria</taxon>
        <taxon>Euarchontoglires</taxon>
        <taxon>Primates</taxon>
        <taxon>Haplorrhini</taxon>
        <taxon>Catarrhini</taxon>
        <taxon>Hominidae</taxon>
        <taxon>Homo</taxon>
    </lineage>
</organism>
<sequence>MAAAGAAVARSPGIGAGPALRARRSPPPRAARLPRLLVLLAAAAVGPGAGGAARLYRAGEDAVWVLDSGSVRGATANSSAAWLVQFYSSWCGHCIGYAPTWRALAGDVRDWASAIRVAALDCMEEKNQAVCHDYDIHFYPTFRYFKAFTKEFTTGENFKGPDRELRTVRQTMIDFLQNHTEGSRPPACPRLDPIQPSDVLSLLDNRGSHYVAIVFESNSSYLGREVILDLIPYESIVVTRALDGDKAFLEKLGVSSVPSCYLIYPNGSHGLINVVKPLRAFFSSYLKSLPDVRKKSLPLPEKPHKEENSEIVVWREFDKSKLYTVDLESGLHYLLRVELAAHKSLAGAELKTLKDFVTVLAKLFPGRPPVKKLLEMLQEWLASLPLDRIPYNAVLDLVNNKMRISGIFLTNHIKWVGCQGSRSELRGYPCSLWKLFHTLTVEASTHPDALVGTGFEDDPQAVLQTMRRYVHTFFGCKECGEHFEEMAKESMDSVKTPDQAILWLWKKHNMVNGRLAGHLSEDPRFPKLQWPTPDLCPACHEEIKGLASWDEGHVLTFLKQHYGRDNLLDTYSADQGDSSEGGTLARGEEEEKRLTPPEVSHGDRDTQSVRPPGALGPRPALPESLHHSLDGKLQSLDGPGAHKEVGGAAPFLGVDFSSLDMSLCVVLYVASSLFLMVMYFFFRVRSRRWKVKHHHPAV</sequence>
<dbReference type="EC" id="1.8.3.2"/>
<dbReference type="EMBL" id="AJ318051">
    <property type="protein sequence ID" value="CAC85331.1"/>
    <property type="status" value="ALT_FRAME"/>
    <property type="molecule type" value="mRNA"/>
</dbReference>
<dbReference type="EMBL" id="AL138781">
    <property type="status" value="NOT_ANNOTATED_CDS"/>
    <property type="molecule type" value="Genomic_DNA"/>
</dbReference>
<dbReference type="EMBL" id="CR392000">
    <property type="status" value="NOT_ANNOTATED_CDS"/>
    <property type="molecule type" value="Genomic_DNA"/>
</dbReference>
<dbReference type="EMBL" id="AK128077">
    <property type="protein sequence ID" value="BAC87262.1"/>
    <property type="status" value="ALT_INIT"/>
    <property type="molecule type" value="mRNA"/>
</dbReference>
<dbReference type="EMBL" id="AL834369">
    <property type="protein sequence ID" value="CAD39032.1"/>
    <property type="molecule type" value="mRNA"/>
</dbReference>
<dbReference type="CCDS" id="CCDS35178.1"/>
<dbReference type="RefSeq" id="NP_859052.3">
    <property type="nucleotide sequence ID" value="NM_181701.4"/>
</dbReference>
<dbReference type="SMR" id="Q6ZRP7"/>
<dbReference type="BioGRID" id="127987">
    <property type="interactions" value="112"/>
</dbReference>
<dbReference type="FunCoup" id="Q6ZRP7">
    <property type="interactions" value="1365"/>
</dbReference>
<dbReference type="IntAct" id="Q6ZRP7">
    <property type="interactions" value="44"/>
</dbReference>
<dbReference type="STRING" id="9606.ENSP00000351536"/>
<dbReference type="GlyCosmos" id="Q6ZRP7">
    <property type="glycosylation" value="6 sites, 2 glycans"/>
</dbReference>
<dbReference type="GlyGen" id="Q6ZRP7">
    <property type="glycosylation" value="17 sites, 3 N-linked glycans (3 sites), 4 O-linked glycans (12 sites)"/>
</dbReference>
<dbReference type="iPTMnet" id="Q6ZRP7"/>
<dbReference type="PhosphoSitePlus" id="Q6ZRP7"/>
<dbReference type="SwissPalm" id="Q6ZRP7"/>
<dbReference type="BioMuta" id="QSOX2"/>
<dbReference type="DMDM" id="158958335"/>
<dbReference type="jPOST" id="Q6ZRP7"/>
<dbReference type="MassIVE" id="Q6ZRP7"/>
<dbReference type="PaxDb" id="9606-ENSP00000351536"/>
<dbReference type="PeptideAtlas" id="Q6ZRP7"/>
<dbReference type="ProteomicsDB" id="68152"/>
<dbReference type="Pumba" id="Q6ZRP7"/>
<dbReference type="Antibodypedia" id="2576">
    <property type="antibodies" value="104 antibodies from 19 providers"/>
</dbReference>
<dbReference type="DNASU" id="169714"/>
<dbReference type="Ensembl" id="ENST00000358701.10">
    <property type="protein sequence ID" value="ENSP00000351536.5"/>
    <property type="gene ID" value="ENSG00000165661.18"/>
</dbReference>
<dbReference type="GeneID" id="169714"/>
<dbReference type="KEGG" id="hsa:169714"/>
<dbReference type="MANE-Select" id="ENST00000358701.10">
    <property type="protein sequence ID" value="ENSP00000351536.5"/>
    <property type="RefSeq nucleotide sequence ID" value="NM_181701.4"/>
    <property type="RefSeq protein sequence ID" value="NP_859052.3"/>
</dbReference>
<dbReference type="UCSC" id="uc010nbi.4">
    <property type="organism name" value="human"/>
</dbReference>
<dbReference type="AGR" id="HGNC:30249"/>
<dbReference type="CTD" id="169714"/>
<dbReference type="DisGeNET" id="169714"/>
<dbReference type="GeneCards" id="QSOX2"/>
<dbReference type="HGNC" id="HGNC:30249">
    <property type="gene designation" value="QSOX2"/>
</dbReference>
<dbReference type="HPA" id="ENSG00000165661">
    <property type="expression patterns" value="Low tissue specificity"/>
</dbReference>
<dbReference type="MIM" id="612860">
    <property type="type" value="gene"/>
</dbReference>
<dbReference type="neXtProt" id="NX_Q6ZRP7"/>
<dbReference type="OpenTargets" id="ENSG00000165661"/>
<dbReference type="PharmGKB" id="PA162400588"/>
<dbReference type="VEuPathDB" id="HostDB:ENSG00000165661"/>
<dbReference type="eggNOG" id="KOG1731">
    <property type="taxonomic scope" value="Eukaryota"/>
</dbReference>
<dbReference type="GeneTree" id="ENSGT00940000159734"/>
<dbReference type="HOGENOM" id="CLU_020182_1_0_1"/>
<dbReference type="InParanoid" id="Q6ZRP7"/>
<dbReference type="OMA" id="VFFGCKE"/>
<dbReference type="OrthoDB" id="59470at2759"/>
<dbReference type="PAN-GO" id="Q6ZRP7">
    <property type="GO annotations" value="5 GO annotations based on evolutionary models"/>
</dbReference>
<dbReference type="PhylomeDB" id="Q6ZRP7"/>
<dbReference type="TreeFam" id="TF316749"/>
<dbReference type="BRENDA" id="1.8.3.2">
    <property type="organism ID" value="2681"/>
</dbReference>
<dbReference type="PathwayCommons" id="Q6ZRP7"/>
<dbReference type="SignaLink" id="Q6ZRP7"/>
<dbReference type="SIGNOR" id="Q6ZRP7"/>
<dbReference type="BioGRID-ORCS" id="169714">
    <property type="hits" value="14 hits in 1169 CRISPR screens"/>
</dbReference>
<dbReference type="ChiTaRS" id="QSOX2">
    <property type="organism name" value="human"/>
</dbReference>
<dbReference type="GenomeRNAi" id="169714"/>
<dbReference type="Pharos" id="Q6ZRP7">
    <property type="development level" value="Tbio"/>
</dbReference>
<dbReference type="PRO" id="PR:Q6ZRP7"/>
<dbReference type="Proteomes" id="UP000005640">
    <property type="component" value="Chromosome 9"/>
</dbReference>
<dbReference type="RNAct" id="Q6ZRP7">
    <property type="molecule type" value="protein"/>
</dbReference>
<dbReference type="Bgee" id="ENSG00000165661">
    <property type="expression patterns" value="Expressed in secondary oocyte and 144 other cell types or tissues"/>
</dbReference>
<dbReference type="ExpressionAtlas" id="Q6ZRP7">
    <property type="expression patterns" value="baseline and differential"/>
</dbReference>
<dbReference type="GO" id="GO:0005615">
    <property type="term" value="C:extracellular space"/>
    <property type="evidence" value="ECO:0000318"/>
    <property type="project" value="GO_Central"/>
</dbReference>
<dbReference type="GO" id="GO:0005794">
    <property type="term" value="C:Golgi apparatus"/>
    <property type="evidence" value="ECO:0000314"/>
    <property type="project" value="HPA"/>
</dbReference>
<dbReference type="GO" id="GO:0000139">
    <property type="term" value="C:Golgi membrane"/>
    <property type="evidence" value="ECO:0000318"/>
    <property type="project" value="GO_Central"/>
</dbReference>
<dbReference type="GO" id="GO:0031965">
    <property type="term" value="C:nuclear membrane"/>
    <property type="evidence" value="ECO:0007669"/>
    <property type="project" value="UniProtKB-SubCell"/>
</dbReference>
<dbReference type="GO" id="GO:0005654">
    <property type="term" value="C:nucleoplasm"/>
    <property type="evidence" value="ECO:0000314"/>
    <property type="project" value="HPA"/>
</dbReference>
<dbReference type="GO" id="GO:0005886">
    <property type="term" value="C:plasma membrane"/>
    <property type="evidence" value="ECO:0007669"/>
    <property type="project" value="UniProtKB-SubCell"/>
</dbReference>
<dbReference type="GO" id="GO:0016971">
    <property type="term" value="F:flavin-dependent sulfhydryl oxidase activity"/>
    <property type="evidence" value="ECO:0000318"/>
    <property type="project" value="GO_Central"/>
</dbReference>
<dbReference type="GO" id="GO:0003756">
    <property type="term" value="F:protein disulfide isomerase activity"/>
    <property type="evidence" value="ECO:0000318"/>
    <property type="project" value="GO_Central"/>
</dbReference>
<dbReference type="GO" id="GO:0006457">
    <property type="term" value="P:protein folding"/>
    <property type="evidence" value="ECO:0000318"/>
    <property type="project" value="GO_Central"/>
</dbReference>
<dbReference type="CDD" id="cd02992">
    <property type="entry name" value="PDI_a_QSOX"/>
    <property type="match status" value="1"/>
</dbReference>
<dbReference type="FunFam" id="1.20.120.1960:FF:000001">
    <property type="entry name" value="Sulfhydryl oxidase"/>
    <property type="match status" value="1"/>
</dbReference>
<dbReference type="FunFam" id="1.20.120.310:FF:000001">
    <property type="entry name" value="Sulfhydryl oxidase"/>
    <property type="match status" value="1"/>
</dbReference>
<dbReference type="FunFam" id="3.40.30.10:FF:000073">
    <property type="entry name" value="Sulfhydryl oxidase"/>
    <property type="match status" value="1"/>
</dbReference>
<dbReference type="FunFam" id="3.40.30.10:FF:000080">
    <property type="entry name" value="Sulfhydryl oxidase"/>
    <property type="match status" value="1"/>
</dbReference>
<dbReference type="Gene3D" id="1.20.120.310">
    <property type="entry name" value="ERV/ALR sulfhydryl oxidase domain"/>
    <property type="match status" value="1"/>
</dbReference>
<dbReference type="Gene3D" id="3.40.30.10">
    <property type="entry name" value="Glutaredoxin"/>
    <property type="match status" value="2"/>
</dbReference>
<dbReference type="Gene3D" id="1.20.120.1960">
    <property type="entry name" value="QSOX sulfhydryl oxidase domain"/>
    <property type="match status" value="1"/>
</dbReference>
<dbReference type="InterPro" id="IPR036774">
    <property type="entry name" value="ERV/ALR_sulphydryl_oxid_sf"/>
</dbReference>
<dbReference type="InterPro" id="IPR017905">
    <property type="entry name" value="ERV/ALR_sulphydryl_oxidase"/>
</dbReference>
<dbReference type="InterPro" id="IPR040986">
    <property type="entry name" value="QSOX_FAD-bd_dom"/>
</dbReference>
<dbReference type="InterPro" id="IPR042568">
    <property type="entry name" value="QSOX_FAD-bd_sf"/>
</dbReference>
<dbReference type="InterPro" id="IPR041269">
    <property type="entry name" value="QSOX_Trx1"/>
</dbReference>
<dbReference type="InterPro" id="IPR039798">
    <property type="entry name" value="Sulfhydryl_oxidase"/>
</dbReference>
<dbReference type="InterPro" id="IPR036249">
    <property type="entry name" value="Thioredoxin-like_sf"/>
</dbReference>
<dbReference type="InterPro" id="IPR013766">
    <property type="entry name" value="Thioredoxin_domain"/>
</dbReference>
<dbReference type="PANTHER" id="PTHR22897">
    <property type="entry name" value="QUIESCIN Q6-RELATED SULFHYDRYL OXIDASE"/>
    <property type="match status" value="1"/>
</dbReference>
<dbReference type="PANTHER" id="PTHR22897:SF7">
    <property type="entry name" value="SULFHYDRYL OXIDASE 2"/>
    <property type="match status" value="1"/>
</dbReference>
<dbReference type="Pfam" id="PF04777">
    <property type="entry name" value="Evr1_Alr"/>
    <property type="match status" value="1"/>
</dbReference>
<dbReference type="Pfam" id="PF18371">
    <property type="entry name" value="FAD_SOX"/>
    <property type="match status" value="1"/>
</dbReference>
<dbReference type="Pfam" id="PF18108">
    <property type="entry name" value="QSOX_Trx1"/>
    <property type="match status" value="1"/>
</dbReference>
<dbReference type="Pfam" id="PF00085">
    <property type="entry name" value="Thioredoxin"/>
    <property type="match status" value="1"/>
</dbReference>
<dbReference type="SUPFAM" id="SSF69000">
    <property type="entry name" value="FAD-dependent thiol oxidase"/>
    <property type="match status" value="1"/>
</dbReference>
<dbReference type="SUPFAM" id="SSF52833">
    <property type="entry name" value="Thioredoxin-like"/>
    <property type="match status" value="1"/>
</dbReference>
<dbReference type="PROSITE" id="PS51324">
    <property type="entry name" value="ERV_ALR"/>
    <property type="match status" value="1"/>
</dbReference>
<dbReference type="PROSITE" id="PS51352">
    <property type="entry name" value="THIOREDOXIN_2"/>
    <property type="match status" value="1"/>
</dbReference>
<proteinExistence type="evidence at protein level"/>
<feature type="signal peptide" evidence="3">
    <location>
        <begin position="1"/>
        <end position="21"/>
    </location>
</feature>
<feature type="chain" id="PRO_0000249538" description="Sulfhydryl oxidase 2">
    <location>
        <begin position="22"/>
        <end position="698"/>
    </location>
</feature>
<feature type="transmembrane region" description="Helical" evidence="3">
    <location>
        <begin position="662"/>
        <end position="682"/>
    </location>
</feature>
<feature type="domain" description="Thioredoxin" evidence="5">
    <location>
        <begin position="34"/>
        <end position="178"/>
    </location>
</feature>
<feature type="domain" description="ERV/ALR sulfhydryl oxidase" evidence="4">
    <location>
        <begin position="421"/>
        <end position="530"/>
    </location>
</feature>
<feature type="region of interest" description="Disordered" evidence="6">
    <location>
        <begin position="570"/>
        <end position="624"/>
    </location>
</feature>
<feature type="compositionally biased region" description="Polar residues" evidence="6">
    <location>
        <begin position="572"/>
        <end position="581"/>
    </location>
</feature>
<feature type="compositionally biased region" description="Basic and acidic residues" evidence="6">
    <location>
        <begin position="586"/>
        <end position="607"/>
    </location>
</feature>
<feature type="compositionally biased region" description="Low complexity" evidence="6">
    <location>
        <begin position="610"/>
        <end position="622"/>
    </location>
</feature>
<feature type="active site" description="Nucleophile" evidence="1">
    <location>
        <position position="91"/>
    </location>
</feature>
<feature type="active site" description="Nucleophile" evidence="1">
    <location>
        <position position="94"/>
    </location>
</feature>
<feature type="binding site" evidence="2">
    <location>
        <position position="426"/>
    </location>
    <ligand>
        <name>FAD</name>
        <dbReference type="ChEBI" id="CHEBI:57692"/>
    </ligand>
</feature>
<feature type="binding site" evidence="2">
    <location>
        <position position="433"/>
    </location>
    <ligand>
        <name>FAD</name>
        <dbReference type="ChEBI" id="CHEBI:57692"/>
    </ligand>
</feature>
<feature type="binding site" evidence="2">
    <location>
        <position position="437"/>
    </location>
    <ligand>
        <name>FAD</name>
        <dbReference type="ChEBI" id="CHEBI:57692"/>
    </ligand>
</feature>
<feature type="binding site" evidence="2">
    <location>
        <position position="478"/>
    </location>
    <ligand>
        <name>FAD</name>
        <dbReference type="ChEBI" id="CHEBI:57692"/>
    </ligand>
</feature>
<feature type="binding site" evidence="2">
    <location>
        <position position="482"/>
    </location>
    <ligand>
        <name>FAD</name>
        <dbReference type="ChEBI" id="CHEBI:57692"/>
    </ligand>
</feature>
<feature type="binding site" evidence="2">
    <location>
        <begin position="505"/>
        <end position="512"/>
    </location>
    <ligand>
        <name>FAD</name>
        <dbReference type="ChEBI" id="CHEBI:57692"/>
    </ligand>
</feature>
<feature type="binding site" evidence="2">
    <location>
        <position position="527"/>
    </location>
    <ligand>
        <name>FAD</name>
        <dbReference type="ChEBI" id="CHEBI:57692"/>
    </ligand>
</feature>
<feature type="binding site" evidence="2">
    <location>
        <position position="530"/>
    </location>
    <ligand>
        <name>FAD</name>
        <dbReference type="ChEBI" id="CHEBI:57692"/>
    </ligand>
</feature>
<feature type="modified residue" description="Phosphoserine" evidence="9">
    <location>
        <position position="579"/>
    </location>
</feature>
<feature type="glycosylation site" description="N-linked (GlcNAc...) asparagine" evidence="3">
    <location>
        <position position="77"/>
    </location>
</feature>
<feature type="glycosylation site" description="N-linked (GlcNAc...) asparagine" evidence="3">
    <location>
        <position position="178"/>
    </location>
</feature>
<feature type="glycosylation site" description="N-linked (GlcNAc...) asparagine" evidence="3">
    <location>
        <position position="218"/>
    </location>
</feature>
<feature type="glycosylation site" description="N-linked (GlcNAc...) asparagine" evidence="3">
    <location>
        <position position="266"/>
    </location>
</feature>
<feature type="disulfide bond" description="Redox-active" evidence="4 5">
    <location>
        <begin position="91"/>
        <end position="94"/>
    </location>
</feature>
<feature type="disulfide bond" evidence="2">
    <location>
        <begin position="122"/>
        <end position="131"/>
    </location>
</feature>
<feature type="disulfide bond" evidence="4">
    <location>
        <begin position="418"/>
        <end position="430"/>
    </location>
</feature>
<feature type="disulfide bond" evidence="4">
    <location>
        <begin position="476"/>
        <end position="479"/>
    </location>
</feature>
<feature type="disulfide bond" evidence="4">
    <location>
        <begin position="536"/>
        <end position="539"/>
    </location>
</feature>
<feature type="sequence variant" id="VAR_027435" description="In dbSNP:rs12380852.">
    <original>K</original>
    <variation>E</variation>
    <location>
        <position position="126"/>
    </location>
</feature>
<feature type="sequence conflict" description="In Ref. 1; CAC85331." evidence="8" ref="1">
    <original>G</original>
    <variation>A</variation>
    <location>
        <position position="96"/>
    </location>
</feature>
<feature type="sequence conflict" description="In Ref. 3; BAC87262." evidence="8" ref="3">
    <original>N</original>
    <variation>K</variation>
    <location>
        <position position="205"/>
    </location>
</feature>
<feature type="sequence conflict" description="In Ref. 1; CAC85331." evidence="8" ref="1">
    <original>R</original>
    <variation>W</variation>
    <location>
        <position position="224"/>
    </location>
</feature>